<sequence>MALTLTDVKRIAHLARLEMADADAEHMLGQLNEFFGLVEQMQAVDTAGIAPLAHPIEQIQEVAQRLRDDAVTEVVNRDDNQRPAPAVQDGLYLVPKVIE</sequence>
<organism>
    <name type="scientific">Burkholderia cenocepacia (strain HI2424)</name>
    <dbReference type="NCBI Taxonomy" id="331272"/>
    <lineage>
        <taxon>Bacteria</taxon>
        <taxon>Pseudomonadati</taxon>
        <taxon>Pseudomonadota</taxon>
        <taxon>Betaproteobacteria</taxon>
        <taxon>Burkholderiales</taxon>
        <taxon>Burkholderiaceae</taxon>
        <taxon>Burkholderia</taxon>
        <taxon>Burkholderia cepacia complex</taxon>
    </lineage>
</organism>
<accession>A0KBI0</accession>
<evidence type="ECO:0000255" key="1">
    <source>
        <dbReference type="HAMAP-Rule" id="MF_00122"/>
    </source>
</evidence>
<protein>
    <recommendedName>
        <fullName evidence="1">Aspartyl/glutamyl-tRNA(Asn/Gln) amidotransferase subunit C</fullName>
        <shortName evidence="1">Asp/Glu-ADT subunit C</shortName>
        <ecNumber evidence="1">6.3.5.-</ecNumber>
    </recommendedName>
</protein>
<name>GATC_BURCH</name>
<keyword id="KW-0067">ATP-binding</keyword>
<keyword id="KW-0436">Ligase</keyword>
<keyword id="KW-0547">Nucleotide-binding</keyword>
<keyword id="KW-0648">Protein biosynthesis</keyword>
<gene>
    <name evidence="1" type="primary">gatC</name>
    <name type="ordered locus">Bcen2424_3109</name>
</gene>
<proteinExistence type="inferred from homology"/>
<reference key="1">
    <citation type="submission" date="2006-08" db="EMBL/GenBank/DDBJ databases">
        <title>Complete sequence of chromosome 1 of Burkholderia cenocepacia HI2424.</title>
        <authorList>
            <person name="Copeland A."/>
            <person name="Lucas S."/>
            <person name="Lapidus A."/>
            <person name="Barry K."/>
            <person name="Detter J.C."/>
            <person name="Glavina del Rio T."/>
            <person name="Hammon N."/>
            <person name="Israni S."/>
            <person name="Pitluck S."/>
            <person name="Chain P."/>
            <person name="Malfatti S."/>
            <person name="Shin M."/>
            <person name="Vergez L."/>
            <person name="Schmutz J."/>
            <person name="Larimer F."/>
            <person name="Land M."/>
            <person name="Hauser L."/>
            <person name="Kyrpides N."/>
            <person name="Kim E."/>
            <person name="LiPuma J.J."/>
            <person name="Gonzalez C.F."/>
            <person name="Konstantinidis K."/>
            <person name="Tiedje J.M."/>
            <person name="Richardson P."/>
        </authorList>
    </citation>
    <scope>NUCLEOTIDE SEQUENCE [LARGE SCALE GENOMIC DNA]</scope>
    <source>
        <strain>HI2424</strain>
    </source>
</reference>
<comment type="function">
    <text evidence="1">Allows the formation of correctly charged Asn-tRNA(Asn) or Gln-tRNA(Gln) through the transamidation of misacylated Asp-tRNA(Asn) or Glu-tRNA(Gln) in organisms which lack either or both of asparaginyl-tRNA or glutaminyl-tRNA synthetases. The reaction takes place in the presence of glutamine and ATP through an activated phospho-Asp-tRNA(Asn) or phospho-Glu-tRNA(Gln).</text>
</comment>
<comment type="catalytic activity">
    <reaction evidence="1">
        <text>L-glutamyl-tRNA(Gln) + L-glutamine + ATP + H2O = L-glutaminyl-tRNA(Gln) + L-glutamate + ADP + phosphate + H(+)</text>
        <dbReference type="Rhea" id="RHEA:17521"/>
        <dbReference type="Rhea" id="RHEA-COMP:9681"/>
        <dbReference type="Rhea" id="RHEA-COMP:9684"/>
        <dbReference type="ChEBI" id="CHEBI:15377"/>
        <dbReference type="ChEBI" id="CHEBI:15378"/>
        <dbReference type="ChEBI" id="CHEBI:29985"/>
        <dbReference type="ChEBI" id="CHEBI:30616"/>
        <dbReference type="ChEBI" id="CHEBI:43474"/>
        <dbReference type="ChEBI" id="CHEBI:58359"/>
        <dbReference type="ChEBI" id="CHEBI:78520"/>
        <dbReference type="ChEBI" id="CHEBI:78521"/>
        <dbReference type="ChEBI" id="CHEBI:456216"/>
    </reaction>
</comment>
<comment type="catalytic activity">
    <reaction evidence="1">
        <text>L-aspartyl-tRNA(Asn) + L-glutamine + ATP + H2O = L-asparaginyl-tRNA(Asn) + L-glutamate + ADP + phosphate + 2 H(+)</text>
        <dbReference type="Rhea" id="RHEA:14513"/>
        <dbReference type="Rhea" id="RHEA-COMP:9674"/>
        <dbReference type="Rhea" id="RHEA-COMP:9677"/>
        <dbReference type="ChEBI" id="CHEBI:15377"/>
        <dbReference type="ChEBI" id="CHEBI:15378"/>
        <dbReference type="ChEBI" id="CHEBI:29985"/>
        <dbReference type="ChEBI" id="CHEBI:30616"/>
        <dbReference type="ChEBI" id="CHEBI:43474"/>
        <dbReference type="ChEBI" id="CHEBI:58359"/>
        <dbReference type="ChEBI" id="CHEBI:78515"/>
        <dbReference type="ChEBI" id="CHEBI:78516"/>
        <dbReference type="ChEBI" id="CHEBI:456216"/>
    </reaction>
</comment>
<comment type="subunit">
    <text evidence="1">Heterotrimer of A, B and C subunits.</text>
</comment>
<comment type="similarity">
    <text evidence="1">Belongs to the GatC family.</text>
</comment>
<feature type="chain" id="PRO_1000016084" description="Aspartyl/glutamyl-tRNA(Asn/Gln) amidotransferase subunit C">
    <location>
        <begin position="1"/>
        <end position="99"/>
    </location>
</feature>
<dbReference type="EC" id="6.3.5.-" evidence="1"/>
<dbReference type="EMBL" id="CP000458">
    <property type="protein sequence ID" value="ABK09857.1"/>
    <property type="molecule type" value="Genomic_DNA"/>
</dbReference>
<dbReference type="RefSeq" id="WP_006477478.1">
    <property type="nucleotide sequence ID" value="NC_008542.1"/>
</dbReference>
<dbReference type="SMR" id="A0KBI0"/>
<dbReference type="GeneID" id="93084644"/>
<dbReference type="KEGG" id="bch:Bcen2424_3109"/>
<dbReference type="HOGENOM" id="CLU_105899_2_2_4"/>
<dbReference type="GO" id="GO:0050566">
    <property type="term" value="F:asparaginyl-tRNA synthase (glutamine-hydrolyzing) activity"/>
    <property type="evidence" value="ECO:0007669"/>
    <property type="project" value="RHEA"/>
</dbReference>
<dbReference type="GO" id="GO:0005524">
    <property type="term" value="F:ATP binding"/>
    <property type="evidence" value="ECO:0007669"/>
    <property type="project" value="UniProtKB-KW"/>
</dbReference>
<dbReference type="GO" id="GO:0050567">
    <property type="term" value="F:glutaminyl-tRNA synthase (glutamine-hydrolyzing) activity"/>
    <property type="evidence" value="ECO:0007669"/>
    <property type="project" value="UniProtKB-UniRule"/>
</dbReference>
<dbReference type="GO" id="GO:0070681">
    <property type="term" value="P:glutaminyl-tRNAGln biosynthesis via transamidation"/>
    <property type="evidence" value="ECO:0007669"/>
    <property type="project" value="TreeGrafter"/>
</dbReference>
<dbReference type="GO" id="GO:0006450">
    <property type="term" value="P:regulation of translational fidelity"/>
    <property type="evidence" value="ECO:0007669"/>
    <property type="project" value="InterPro"/>
</dbReference>
<dbReference type="GO" id="GO:0006412">
    <property type="term" value="P:translation"/>
    <property type="evidence" value="ECO:0007669"/>
    <property type="project" value="UniProtKB-UniRule"/>
</dbReference>
<dbReference type="Gene3D" id="1.10.20.60">
    <property type="entry name" value="Glu-tRNAGln amidotransferase C subunit, N-terminal domain"/>
    <property type="match status" value="1"/>
</dbReference>
<dbReference type="HAMAP" id="MF_00122">
    <property type="entry name" value="GatC"/>
    <property type="match status" value="1"/>
</dbReference>
<dbReference type="InterPro" id="IPR036113">
    <property type="entry name" value="Asp/Glu-ADT_sf_sub_c"/>
</dbReference>
<dbReference type="InterPro" id="IPR003837">
    <property type="entry name" value="GatC"/>
</dbReference>
<dbReference type="NCBIfam" id="TIGR00135">
    <property type="entry name" value="gatC"/>
    <property type="match status" value="1"/>
</dbReference>
<dbReference type="PANTHER" id="PTHR15004">
    <property type="entry name" value="GLUTAMYL-TRNA(GLN) AMIDOTRANSFERASE SUBUNIT C, MITOCHONDRIAL"/>
    <property type="match status" value="1"/>
</dbReference>
<dbReference type="PANTHER" id="PTHR15004:SF0">
    <property type="entry name" value="GLUTAMYL-TRNA(GLN) AMIDOTRANSFERASE SUBUNIT C, MITOCHONDRIAL"/>
    <property type="match status" value="1"/>
</dbReference>
<dbReference type="Pfam" id="PF02686">
    <property type="entry name" value="GatC"/>
    <property type="match status" value="1"/>
</dbReference>
<dbReference type="SUPFAM" id="SSF141000">
    <property type="entry name" value="Glu-tRNAGln amidotransferase C subunit"/>
    <property type="match status" value="1"/>
</dbReference>